<dbReference type="EMBL" id="M30767">
    <property type="protein sequence ID" value="AAA43488.1"/>
    <property type="molecule type" value="Genomic_RNA"/>
</dbReference>
<dbReference type="SMR" id="P15681"/>
<dbReference type="Proteomes" id="UP000101256">
    <property type="component" value="Genome"/>
</dbReference>
<dbReference type="GO" id="GO:0019029">
    <property type="term" value="C:helical viral capsid"/>
    <property type="evidence" value="ECO:0007669"/>
    <property type="project" value="UniProtKB-UniRule"/>
</dbReference>
<dbReference type="GO" id="GO:0043657">
    <property type="term" value="C:host cell"/>
    <property type="evidence" value="ECO:0007669"/>
    <property type="project" value="GOC"/>
</dbReference>
<dbReference type="GO" id="GO:0042025">
    <property type="term" value="C:host cell nucleus"/>
    <property type="evidence" value="ECO:0007669"/>
    <property type="project" value="UniProtKB-SubCell"/>
</dbReference>
<dbReference type="GO" id="GO:1990904">
    <property type="term" value="C:ribonucleoprotein complex"/>
    <property type="evidence" value="ECO:0007669"/>
    <property type="project" value="UniProtKB-KW"/>
</dbReference>
<dbReference type="GO" id="GO:0019013">
    <property type="term" value="C:viral nucleocapsid"/>
    <property type="evidence" value="ECO:0007669"/>
    <property type="project" value="UniProtKB-UniRule"/>
</dbReference>
<dbReference type="GO" id="GO:0003723">
    <property type="term" value="F:RNA binding"/>
    <property type="evidence" value="ECO:0007669"/>
    <property type="project" value="UniProtKB-UniRule"/>
</dbReference>
<dbReference type="GO" id="GO:0005198">
    <property type="term" value="F:structural molecule activity"/>
    <property type="evidence" value="ECO:0007669"/>
    <property type="project" value="UniProtKB-UniRule"/>
</dbReference>
<dbReference type="GO" id="GO:0046718">
    <property type="term" value="P:symbiont entry into host cell"/>
    <property type="evidence" value="ECO:0007669"/>
    <property type="project" value="UniProtKB-KW"/>
</dbReference>
<dbReference type="GO" id="GO:0075732">
    <property type="term" value="P:viral penetration into host nucleus"/>
    <property type="evidence" value="ECO:0007669"/>
    <property type="project" value="UniProtKB-UniRule"/>
</dbReference>
<dbReference type="HAMAP" id="MF_04070">
    <property type="entry name" value="INFV_NCAP"/>
    <property type="match status" value="1"/>
</dbReference>
<dbReference type="InterPro" id="IPR002141">
    <property type="entry name" value="Flu_NP"/>
</dbReference>
<dbReference type="Pfam" id="PF00506">
    <property type="entry name" value="Flu_NP"/>
    <property type="match status" value="1"/>
</dbReference>
<dbReference type="SUPFAM" id="SSF161003">
    <property type="entry name" value="flu NP-like"/>
    <property type="match status" value="1"/>
</dbReference>
<comment type="function">
    <text evidence="1">Encapsidates the negative strand viral RNA, protecting it from nucleases. The encapsidated genomic RNA is termed the ribonucleoprotein (RNP) and serves as template for transcription and replication. The RNP needs to be localized in the host nucleus to start an infectious cycle, but is too large to diffuse through the nuclear pore complex. NP comprises at least 2 nuclear localization signals that are responsible for the active RNP import into the nucleus through cellular importin alpha/beta pathway. Later in the infection, nclear export of RNPs are mediated through viral proteins NEP interacting with M1 which binds nucleoproteins. It is possible that nucleoprotein binds directly host exportin-1/XPO1 and plays an active role in RNPs nuclear export. M1 interaction with RNP seems to hide nucleoprotein's nuclear localization signals. Soon after a virion infects a new cell, M1 dissociates from the RNP under acidification of the virion driven by M2 protein. Dissociation of M1 from RNP unmasks nucleoprotein's nuclear localization signals, targeting the RNP to the nucleus.</text>
</comment>
<comment type="subunit">
    <text evidence="1">Homomultimerizes to form the nucleocapsid. May bind host exportin-1/XPO1. Binds to viral genomic RNA. Protein-RNA contacts are mediated by a combination of electrostatic interactions between positively charged residues and the phosphate backbone and planar interactions between aromatic side chains and bases.</text>
</comment>
<comment type="subcellular location">
    <subcellularLocation>
        <location evidence="1">Virion</location>
    </subcellularLocation>
    <subcellularLocation>
        <location evidence="1">Host nucleus</location>
    </subcellularLocation>
</comment>
<comment type="PTM">
    <text evidence="1">Late in virus-infected cells, may be cleaved from a 56-kDa protein to a 53-kDa protein by a cellular caspase. This cleavage might be a marker for the onset of apoptosis in infected cells or have a specific function in virus host interaction.</text>
</comment>
<comment type="similarity">
    <text evidence="1">Belongs to the influenza viruses nucleoprotein family.</text>
</comment>
<accession>P15681</accession>
<keyword id="KW-0167">Capsid protein</keyword>
<keyword id="KW-1139">Helical capsid protein</keyword>
<keyword id="KW-1048">Host nucleus</keyword>
<keyword id="KW-0945">Host-virus interaction</keyword>
<keyword id="KW-0687">Ribonucleoprotein</keyword>
<keyword id="KW-0694">RNA-binding</keyword>
<keyword id="KW-0543">Viral nucleoprotein</keyword>
<keyword id="KW-1163">Viral penetration into host nucleus</keyword>
<keyword id="KW-0946">Virion</keyword>
<keyword id="KW-1160">Virus entry into host cell</keyword>
<organismHost>
    <name type="scientific">Aves</name>
    <dbReference type="NCBI Taxonomy" id="8782"/>
</organismHost>
<proteinExistence type="inferred from homology"/>
<evidence type="ECO:0000255" key="1">
    <source>
        <dbReference type="HAMAP-Rule" id="MF_04070"/>
    </source>
</evidence>
<evidence type="ECO:0000256" key="2">
    <source>
        <dbReference type="SAM" id="MobiDB-lite"/>
    </source>
</evidence>
<feature type="chain" id="PRO_0000079105" description="Nucleoprotein">
    <location>
        <begin position="1"/>
        <end position="498"/>
    </location>
</feature>
<feature type="region of interest" description="Disordered" evidence="2">
    <location>
        <begin position="1"/>
        <end position="21"/>
    </location>
</feature>
<feature type="short sequence motif" description="Unconventional nuclear localization signal" evidence="1">
    <location>
        <begin position="1"/>
        <end position="18"/>
    </location>
</feature>
<feature type="short sequence motif" description="Bipartite nuclear localization signal" evidence="1">
    <location>
        <begin position="198"/>
        <end position="216"/>
    </location>
</feature>
<reference key="1">
    <citation type="journal article" date="1990" name="J. Virol.">
        <title>Evolution of the nucleoprotein gene of influenza A virus.</title>
        <authorList>
            <person name="Gorman O.T."/>
            <person name="Bean W.J."/>
            <person name="Kawaoka Y."/>
            <person name="Webster R.G."/>
        </authorList>
    </citation>
    <scope>NUCLEOTIDE SEQUENCE [GENOMIC RNA]</scope>
</reference>
<gene>
    <name evidence="1" type="primary">NP</name>
</gene>
<protein>
    <recommendedName>
        <fullName evidence="1">Nucleoprotein</fullName>
    </recommendedName>
    <alternativeName>
        <fullName evidence="1">Nucleocapsid protein</fullName>
        <shortName evidence="1">Protein N</shortName>
    </alternativeName>
</protein>
<name>NCAP_I61A0</name>
<organism>
    <name type="scientific">Influenza A virus (strain A/Tern/South Africa/1961 H5N3)</name>
    <dbReference type="NCBI Taxonomy" id="384510"/>
    <lineage>
        <taxon>Viruses</taxon>
        <taxon>Riboviria</taxon>
        <taxon>Orthornavirae</taxon>
        <taxon>Negarnaviricota</taxon>
        <taxon>Polyploviricotina</taxon>
        <taxon>Insthoviricetes</taxon>
        <taxon>Articulavirales</taxon>
        <taxon>Orthomyxoviridae</taxon>
        <taxon>Alphainfluenzavirus</taxon>
        <taxon>Alphainfluenzavirus influenzae</taxon>
        <taxon>Influenza A virus</taxon>
    </lineage>
</organism>
<sequence>MASQGTKRSYEQMETGGERQNATEIRASVGRMVGGIGRFYIQMCTELKLSDYEGRLIQNSITIERMVLSAFDERRNKYLEEHPSAGKDPKKTGGPIYRRRDGKWMRELILYDKEEIRRIWRQANNGEDATAGLTHLMIWHSNLNDATYQRTRALVRTGMDPRMCSLMQGSTLPRRSGAAGAAVKGVGTMVMELIRMIKRGINDRNFWRGENGRRTRIAYERMCNILKGKFQTAAQRAMMDQVRESRNPGNAEIEDLIFLARSALILRGSVAHKSCLPACVYGLAVASGYDFEREGYSLVGIDPFRLLQNSQVFSLIRPKENPAHKSQLVWMACHSAAFEDLRVSSFIRGTRVVPRGQLSTRGFQIASNENMEAMDSSTLELRSRYWAIRTRSGGNTNQQRASAGQISVQPTFSVQRNLPFERATIMAAFTGNTEGRTSDMRTEIIRMMESARPEDVSFQGRGVFELSDEKATNPIVPSFDMSNEGSYFFGDNAEEYDN</sequence>